<keyword id="KW-0091">Biomineralization</keyword>
<keyword id="KW-0106">Calcium</keyword>
<keyword id="KW-0209">Deafness</keyword>
<keyword id="KW-0225">Disease variant</keyword>
<keyword id="KW-0272">Extracellular matrix</keyword>
<keyword id="KW-0325">Glycoprotein</keyword>
<keyword id="KW-0597">Phosphoprotein</keyword>
<keyword id="KW-1267">Proteomics identification</keyword>
<keyword id="KW-1185">Reference proteome</keyword>
<keyword id="KW-0964">Secreted</keyword>
<keyword id="KW-0730">Sialic acid</keyword>
<keyword id="KW-0732">Signal</keyword>
<sequence>MKIITYFCIWAVAWAIPVPQSKPLERHVEKSMNLHLLARSNVSVQDELNASGTIKESGVLVHEGDRGRQENTQDGHKGEGNGSKWAEVGGKSFSTYSTLANEEGNIEGWNGDTGKAETYGHDGIHGKEENITANGIQGQVSIIDNAGATNRSNTNGNTDKNTQNGDVGDAGHNEDVAVVQEDGPQVAGSNNSTDNEDEIIENSCRNEGNTSEITPQINSKRNGTKEAEVTPGTGEDAGLDNSDGSPSGNGADEDEDEGSGDDEDEEAGNGKDSSNNSKGQEGQDHGKEDDHDSSIGQNSDSKEYYDPEGKEDPHNEVDGDKTSKSEENSAGIPEDNGSQRIEDTQKLNHRESKRVENRITKESETHAVGKSQDKGIEIKGPSSGNRNITKEVGKGNEGKEDKGQHGMILGKGNVKTQGEVVNIEGPGQKSEPGNKVGHSNTGSDSNSDGYDSYDFDDKSMQGDDPNSSDESNGNDDANSESDNNSSSRGDASYNSDESKDNGNGSDSKGAEDDDSDSTSDTNNSDSNGNGNNGNDDNDKSDSGKGKSDSSDSDSSDSSNSSDSSDSSDSDSSDSNSSSDSDSSDSDSSDSSDSDSSDSSNSSDSSDSSDSSDSSDSSDSSDSKSDSSKSESDSSDSDSKSDSSDSNSSDSSDNSDSSDSSNSSNSSDSSDSSDSSDSSSSSDSSNSSDSSDSSDSSNSSESSDSSDSSDSDSSDSSDSSNSNSSDSDSSNSSDSSDSSNSSDSSDSSDSSNSSDSSDSSDSSNSSDSSDSSDSSDSSDSSNSSDSNDSSNSSDSSDSSNSSDSSNSSDSSDSSDSSDSDSSNSSDSSNSSDSSDSSNSSDSSDSSDSSDGSDSDSSNRSDSSNSSDSSDSSDSSNSSDSSDSSDSNESSNSSDSSDSSNSSDSDSSDSSNSSDSSDSSNSSDSSESSNSSDNSNSSDSSNSSDSSDSSDSSNSSDSSNSSDSSNSSDSSDSNSSDSSDSSNSSDSSDSSDSSDSSDSSDSSNSSDSSDSSDSSDSSNSSDSSNSSDSSNSSDSSDSSDSSDSSDSSDSSDSSDSSNSSDSSDSSDSSDSSDSSDSSDSSDSSESSDSSDSSNSSDSSDSSDSSDSSDSSDSSDSSDSSDSSNSSDSSDSSDSSDSSDSSNSSDSSDSSESSDSSDSSDSSDSSDSSDSSDSSDSSDSSNSSDSSDSSDSSDSSDSSDSSDSSDSSDSSDSSDSSDSSDSSDSSDSSDSSDSNESSDSSDSSDSSDSSNSSDSSDSSDSSDSTSDSNDESDSQSKSGNGNNNGSDSDSDSEGSDSNHSTSDD</sequence>
<organism>
    <name type="scientific">Homo sapiens</name>
    <name type="common">Human</name>
    <dbReference type="NCBI Taxonomy" id="9606"/>
    <lineage>
        <taxon>Eukaryota</taxon>
        <taxon>Metazoa</taxon>
        <taxon>Chordata</taxon>
        <taxon>Craniata</taxon>
        <taxon>Vertebrata</taxon>
        <taxon>Euteleostomi</taxon>
        <taxon>Mammalia</taxon>
        <taxon>Eutheria</taxon>
        <taxon>Euarchontoglires</taxon>
        <taxon>Primates</taxon>
        <taxon>Haplorrhini</taxon>
        <taxon>Catarrhini</taxon>
        <taxon>Hominidae</taxon>
        <taxon>Homo</taxon>
    </lineage>
</organism>
<gene>
    <name type="primary">DSPP</name>
</gene>
<evidence type="ECO:0000250" key="1"/>
<evidence type="ECO:0000250" key="2">
    <source>
        <dbReference type="UniProtKB" id="Q62598"/>
    </source>
</evidence>
<evidence type="ECO:0000255" key="3"/>
<evidence type="ECO:0000256" key="4">
    <source>
        <dbReference type="SAM" id="MobiDB-lite"/>
    </source>
</evidence>
<evidence type="ECO:0000269" key="5">
    <source>
    </source>
</evidence>
<evidence type="ECO:0000269" key="6">
    <source>
    </source>
</evidence>
<evidence type="ECO:0000269" key="7">
    <source>
    </source>
</evidence>
<evidence type="ECO:0000269" key="8">
    <source>
    </source>
</evidence>
<evidence type="ECO:0000269" key="9">
    <source>
    </source>
</evidence>
<evidence type="ECO:0000269" key="10">
    <source>
    </source>
</evidence>
<evidence type="ECO:0000269" key="11">
    <source>
    </source>
</evidence>
<evidence type="ECO:0000269" key="12">
    <source>
    </source>
</evidence>
<evidence type="ECO:0000269" key="13">
    <source>
    </source>
</evidence>
<evidence type="ECO:0000269" key="14">
    <source>
    </source>
</evidence>
<evidence type="ECO:0000269" key="15">
    <source>
    </source>
</evidence>
<evidence type="ECO:0000305" key="16"/>
<reference key="1">
    <citation type="journal article" date="2000" name="Eur. J. Oral Sci.">
        <title>Molecular cloning of a human dentin sialophosphoprotein gene.</title>
        <authorList>
            <person name="Gu K."/>
            <person name="Chang S.R."/>
            <person name="Ritchie H.H."/>
            <person name="Clarkson B.H."/>
            <person name="Rutherford R.B."/>
        </authorList>
    </citation>
    <scope>NUCLEOTIDE SEQUENCE [GENOMIC DNA]</scope>
</reference>
<reference key="2">
    <citation type="journal article" date="2005" name="Nature">
        <title>Generation and annotation of the DNA sequences of human chromosomes 2 and 4.</title>
        <authorList>
            <person name="Hillier L.W."/>
            <person name="Graves T.A."/>
            <person name="Fulton R.S."/>
            <person name="Fulton L.A."/>
            <person name="Pepin K.H."/>
            <person name="Minx P."/>
            <person name="Wagner-McPherson C."/>
            <person name="Layman D."/>
            <person name="Wylie K."/>
            <person name="Sekhon M."/>
            <person name="Becker M.C."/>
            <person name="Fewell G.A."/>
            <person name="Delehaunty K.D."/>
            <person name="Miner T.L."/>
            <person name="Nash W.E."/>
            <person name="Kremitzki C."/>
            <person name="Oddy L."/>
            <person name="Du H."/>
            <person name="Sun H."/>
            <person name="Bradshaw-Cordum H."/>
            <person name="Ali J."/>
            <person name="Carter J."/>
            <person name="Cordes M."/>
            <person name="Harris A."/>
            <person name="Isak A."/>
            <person name="van Brunt A."/>
            <person name="Nguyen C."/>
            <person name="Du F."/>
            <person name="Courtney L."/>
            <person name="Kalicki J."/>
            <person name="Ozersky P."/>
            <person name="Abbott S."/>
            <person name="Armstrong J."/>
            <person name="Belter E.A."/>
            <person name="Caruso L."/>
            <person name="Cedroni M."/>
            <person name="Cotton M."/>
            <person name="Davidson T."/>
            <person name="Desai A."/>
            <person name="Elliott G."/>
            <person name="Erb T."/>
            <person name="Fronick C."/>
            <person name="Gaige T."/>
            <person name="Haakenson W."/>
            <person name="Haglund K."/>
            <person name="Holmes A."/>
            <person name="Harkins R."/>
            <person name="Kim K."/>
            <person name="Kruchowski S.S."/>
            <person name="Strong C.M."/>
            <person name="Grewal N."/>
            <person name="Goyea E."/>
            <person name="Hou S."/>
            <person name="Levy A."/>
            <person name="Martinka S."/>
            <person name="Mead K."/>
            <person name="McLellan M.D."/>
            <person name="Meyer R."/>
            <person name="Randall-Maher J."/>
            <person name="Tomlinson C."/>
            <person name="Dauphin-Kohlberg S."/>
            <person name="Kozlowicz-Reilly A."/>
            <person name="Shah N."/>
            <person name="Swearengen-Shahid S."/>
            <person name="Snider J."/>
            <person name="Strong J.T."/>
            <person name="Thompson J."/>
            <person name="Yoakum M."/>
            <person name="Leonard S."/>
            <person name="Pearman C."/>
            <person name="Trani L."/>
            <person name="Radionenko M."/>
            <person name="Waligorski J.E."/>
            <person name="Wang C."/>
            <person name="Rock S.M."/>
            <person name="Tin-Wollam A.-M."/>
            <person name="Maupin R."/>
            <person name="Latreille P."/>
            <person name="Wendl M.C."/>
            <person name="Yang S.-P."/>
            <person name="Pohl C."/>
            <person name="Wallis J.W."/>
            <person name="Spieth J."/>
            <person name="Bieri T.A."/>
            <person name="Berkowicz N."/>
            <person name="Nelson J.O."/>
            <person name="Osborne J."/>
            <person name="Ding L."/>
            <person name="Meyer R."/>
            <person name="Sabo A."/>
            <person name="Shotland Y."/>
            <person name="Sinha P."/>
            <person name="Wohldmann P.E."/>
            <person name="Cook L.L."/>
            <person name="Hickenbotham M.T."/>
            <person name="Eldred J."/>
            <person name="Williams D."/>
            <person name="Jones T.A."/>
            <person name="She X."/>
            <person name="Ciccarelli F.D."/>
            <person name="Izaurralde E."/>
            <person name="Taylor J."/>
            <person name="Schmutz J."/>
            <person name="Myers R.M."/>
            <person name="Cox D.R."/>
            <person name="Huang X."/>
            <person name="McPherson J.D."/>
            <person name="Mardis E.R."/>
            <person name="Clifton S.W."/>
            <person name="Warren W.C."/>
            <person name="Chinwalla A.T."/>
            <person name="Eddy S.R."/>
            <person name="Marra M.A."/>
            <person name="Ovcharenko I."/>
            <person name="Furey T.S."/>
            <person name="Miller W."/>
            <person name="Eichler E.E."/>
            <person name="Bork P."/>
            <person name="Suyama M."/>
            <person name="Torrents D."/>
            <person name="Waterston R.H."/>
            <person name="Wilson R.K."/>
        </authorList>
    </citation>
    <scope>NUCLEOTIDE SEQUENCE [LARGE SCALE GENOMIC DNA]</scope>
</reference>
<reference key="3">
    <citation type="journal article" date="1998" name="Eur. J. Oral Sci.">
        <title>Human dentin phosphophoryn nucleotide and amino acid sequence.</title>
        <authorList>
            <person name="Gu K."/>
            <person name="Chang S.R."/>
            <person name="Slaven M.S."/>
            <person name="Clarkson B.H."/>
            <person name="Rutherford R.B."/>
            <person name="Ritchie H.H."/>
        </authorList>
    </citation>
    <scope>NUCLEOTIDE SEQUENCE [MRNA] OF 463-1301</scope>
    <source>
        <tissue>Tooth</tissue>
    </source>
</reference>
<reference key="4">
    <citation type="journal article" date="2001" name="Nat. Genet.">
        <title>DSPP mutation in dentinogenesis imperfecta Shields type II.</title>
        <authorList>
            <person name="Zhang X."/>
            <person name="Zhao J."/>
            <person name="Li C."/>
            <person name="Gao S."/>
            <person name="Qiu C."/>
            <person name="Liu P."/>
            <person name="Wu G."/>
            <person name="Qiang B."/>
            <person name="Lo W.H.Y."/>
            <person name="Shen Y."/>
        </authorList>
    </citation>
    <scope>INVOLVEMENT IN DGI2</scope>
</reference>
<reference key="5">
    <citation type="journal article" date="2008" name="Hum. Mutat.">
        <title>A comprehensive analysis of normal variation and disease-causing mutations in the human DSPP gene.</title>
        <authorList>
            <person name="McKnight D.A."/>
            <person name="Suzanne Hart P."/>
            <person name="Hart T.C."/>
            <person name="Hartsfield J.K."/>
            <person name="Wilson A."/>
            <person name="Wright J.T."/>
            <person name="Fisher L.W."/>
        </authorList>
    </citation>
    <scope>INVOLVEMENT IN DGI2; DGI3 AND DTDP2</scope>
    <scope>VARIANT DGI3 SER-17</scope>
</reference>
<reference key="6">
    <citation type="journal article" date="2001" name="Nat. Genet.">
        <title>Dentinogenesis imperfecta 1 with or without progressive hearing loss is associated with distinct mutations in DSPP.</title>
        <authorList>
            <person name="Xiao S."/>
            <person name="Yu C."/>
            <person name="Chou X."/>
            <person name="Yuan W."/>
            <person name="Wang Y."/>
            <person name="Bu L."/>
            <person name="Fu G."/>
            <person name="Qian M."/>
            <person name="Yang J."/>
            <person name="Shi Y."/>
            <person name="Hu L."/>
            <person name="Han B."/>
            <person name="Wang Z."/>
            <person name="Huang W."/>
            <person name="Liu J."/>
            <person name="Chen Z."/>
            <person name="Zhao G."/>
            <person name="Kong X."/>
        </authorList>
    </citation>
    <scope>VARIANTS DFNA39/DGI1 THR-17 AND PHE-18</scope>
</reference>
<reference key="7">
    <citation type="journal article" date="2002" name="Hum. Mol. Genet.">
        <title>Mutation of the signal peptide region of the bicistronic gene DSPP affects translocation to the endoplasmic reticulum and results in defective dentine biomineralization.</title>
        <authorList>
            <person name="Rajpar M.H."/>
            <person name="Koch M.J."/>
            <person name="Davies R.M."/>
            <person name="Mellody K.T."/>
            <person name="Kielty C.M."/>
            <person name="Dixon M.J."/>
        </authorList>
    </citation>
    <scope>VARIANT DTDP2 ASP-6</scope>
    <scope>CHARACTERIZATION OF VARIANT DTDP2 ASP-6</scope>
</reference>
<reference key="8">
    <citation type="journal article" date="2004" name="Hum. Genet.">
        <title>Clinical, histopathologic, and genetic investigation in two large families with dentinogenesis imperfecta type II.</title>
        <authorList>
            <person name="Malmgren B."/>
            <person name="Lindskog S."/>
            <person name="Elgadi A."/>
            <person name="Norgren S."/>
        </authorList>
    </citation>
    <scope>VARIANTS DGI2 VAL-15 AND TRP-68</scope>
</reference>
<reference key="9">
    <citation type="journal article" date="2005" name="Hum. Genet.">
        <title>Mutational hot spot in the DSPP gene causing dentinogenesis imperfecta type II.</title>
        <authorList>
            <person name="Kim J.-W."/>
            <person name="Hu J.C.-C."/>
            <person name="Lee J.-I."/>
            <person name="Moon S.-K."/>
            <person name="Kim Y.-J."/>
            <person name="Jang K.-T."/>
            <person name="Lee S.-H."/>
            <person name="Kim C.-C."/>
            <person name="Hahn S.-H."/>
            <person name="Simmer J.P."/>
        </authorList>
    </citation>
    <scope>VARIANT DGI3 PHE-18</scope>
</reference>
<reference key="10">
    <citation type="journal article" date="2006" name="Nat. Genet.">
        <title>DMP1 mutations in autosomal recessive hypophosphatemia implicate a bone matrix protein in the regulation of phosphate homeostasis.</title>
        <authorList>
            <person name="Lorenz-Depiereux B."/>
            <person name="Bastepe M."/>
            <person name="Benet-Pages A."/>
            <person name="Amyere M."/>
            <person name="Wagenstaller J."/>
            <person name="Mueller-Barth U."/>
            <person name="Badenhoop K."/>
            <person name="Kaiser S.M."/>
            <person name="Rittmaster R.S."/>
            <person name="Shlossberg A.H."/>
            <person name="Olivares J.L."/>
            <person name="Loris C."/>
            <person name="Ramos F.J."/>
            <person name="Glorieux F."/>
            <person name="Vikkula M."/>
            <person name="Jueppner H."/>
            <person name="Strom T.M."/>
        </authorList>
    </citation>
    <scope>VARIANT TRP-68</scope>
</reference>
<reference key="11">
    <citation type="journal article" date="2007" name="Cells Tissues Organs">
        <title>Disorders of human dentin.</title>
        <authorList>
            <person name="Hart P.S."/>
            <person name="Hart T.C."/>
        </authorList>
    </citation>
    <scope>VARIANT DGI2 SER-17</scope>
</reference>
<reference key="12">
    <citation type="journal article" date="2011" name="Oral Dis.">
        <title>Identification of the DSPP mutation in a new kindred and phenotype-genotype correlation.</title>
        <authorList>
            <person name="Lee S.K."/>
            <person name="Lee K.E."/>
            <person name="Hwang Y.H."/>
            <person name="Kida M."/>
            <person name="Tsutsumi T."/>
            <person name="Ariga T."/>
            <person name="Park J.C."/>
            <person name="Kim J.W."/>
        </authorList>
    </citation>
    <scope>VARIANT DGI2 ASP-18</scope>
</reference>
<reference key="13">
    <citation type="journal article" date="2012" name="J. Bone Miner. Res.">
        <title>Rough endoplasmic reticulum trafficking errors by different classes of mutant dentin sialophosphoprotein (DSPP) cause dominant negative effects in both dentinogenesis imperfecta and dentin dysplasia by entrapping normal DSPP.</title>
        <authorList>
            <person name="von Marschall Z."/>
            <person name="Mok S."/>
            <person name="Phillips M.D."/>
            <person name="McKnight D.A."/>
            <person name="Fisher L.W."/>
        </authorList>
    </citation>
    <scope>CHARACTERIZATION OF VARIANT DFNA39/DGI1 THR-17</scope>
    <scope>CHARACTERIZATION OF VARIANTS DGI2 VAL-15; SER-17 AND ASP-18</scope>
</reference>
<reference key="14">
    <citation type="journal article" date="2013" name="Biomed. Res. Int.">
        <title>A DSPP mutation causing dentinogenesis imperfecta and characterization of the mutational effect.</title>
        <authorList>
            <person name="Lee S.K."/>
            <person name="Lee K.E."/>
            <person name="Song S.J."/>
            <person name="Hyun H.K."/>
            <person name="Lee S.H."/>
            <person name="Kim J.W."/>
        </authorList>
    </citation>
    <scope>VARIANT DGI3 LEU-17</scope>
    <scope>CHARACTERIZATION OF VARIANT DGI3 LEU-17</scope>
</reference>
<comment type="function">
    <text>DSP may be an important factor in dentinogenesis. DPP may bind high amount of calcium and facilitate initial mineralization of dentin matrix collagen as well as regulate the size and shape of the crystals.</text>
</comment>
<comment type="subunit">
    <text evidence="1">Interacts with FBLN7.</text>
</comment>
<comment type="subcellular location">
    <subcellularLocation>
        <location>Secreted</location>
        <location>Extracellular space</location>
        <location>Extracellular matrix</location>
    </subcellularLocation>
</comment>
<comment type="tissue specificity">
    <text>Expressed in teeth. DPP is synthesized by odontoblast and transiently expressed by pre-ameloblasts.</text>
</comment>
<comment type="PTM">
    <text>DSP is glycosylated.</text>
</comment>
<comment type="disease" evidence="6 14">
    <disease id="DI-01206">
        <name>Deafness, autosomal dominant, 39, with dentinogenesis imperfecta 1</name>
        <acronym>DFNA39/DGI1</acronym>
        <description>A disorder characterized by the association of progressive sensorineural high-frequency hearing loss with dentinogenesis imperfecta.</description>
        <dbReference type="MIM" id="605594"/>
    </disease>
    <text>The disease is caused by variants affecting the gene represented in this entry.</text>
</comment>
<comment type="disease" evidence="5 8 11 13 14">
    <disease id="DI-01479">
        <name>Dentinogenesis imperfecta, Shields type 2</name>
        <acronym>DGI2</acronym>
        <description>A form of dentinogenesis imperfecta, an autosomal dominant dentin disorder characterized by amber-brown, opalescent teeth that fracture and shed their enamel during mastication, thereby exposing the dentin to rapid wear. Radiographically, the crown appears bulbous and pulpal obliteration is common. The pulp chambers are initially larger than normal prior and immediately after tooth eruption, and then progressively close down to become almost obliterated by abnormal dentin formation. Roots are short and thin. Both primary and permanent teeth are affected. DGI2 is not associated with osteogenesis imperfecta.</description>
        <dbReference type="MIM" id="125490"/>
    </disease>
    <text>The disease is caused by variants affecting the gene represented in this entry. DSPP defects causing dentin abnormalities act in a dominant negative manner and include missense, splice-site, frameshift mutations. 5' frameshift mutations cause dentin dysplasia while frameshift mutations at the 3' end cause the more severe dentinogenesis imperfecta phenotype (PubMed:18521831, PubMed:22392858).</text>
</comment>
<comment type="disease" evidence="9 12 15">
    <disease id="DI-01478">
        <name>Dentinogenesis imperfecta, Shields type 3</name>
        <acronym>DGI3</acronym>
        <description>A form of dentinogenesis imperfecta, an autosomal dominant dentin disorder characterized by amber-brown, opalescent teeth that fracture and shed their enamel during mastication, thereby exposing the dentin to rapid wear. Radiographically, the crown appears bulbous and pulpal obliteration is common. The pulp chambers are initially larger than normal prior and immediately after tooth eruption, and then progressively close down to become almost obliterated by abnormal dentin formation. Roots are short and thin. Both primary and permanent teeth are affected. DGI3 teeth typically manifest multiple periapical radiolucencies. DGI3 is not associated with osteogenesis imperfecta.</description>
        <dbReference type="MIM" id="125500"/>
    </disease>
    <text>The disease is caused by variants affecting the gene represented in this entry. DSPP defects causing dentin abnormalities act in a dominant negative manner and include missense, splice-site, frameshift mutations. 5' frameshift mutations cause dentin dysplasia while frameshift mutations at the 3' end cause the more severe dentinogenesis imperfecta phenotype (PubMed:18521831, PubMed:22392858).</text>
</comment>
<comment type="disease" evidence="7 12">
    <disease id="DI-01477">
        <name>Dentin dysplasia 2</name>
        <acronym>DTDP2</acronym>
        <description>A dental defect in which the deciduous teeth are opalescent. The permanent teeth are of normal shape, form, and color in most cases. The root length is normal. On radiographs, the pulp chambers of permanent teeth are obliterated, have a thistle-tube deformity and contain pulp stones.</description>
        <dbReference type="MIM" id="125420"/>
    </disease>
    <text evidence="12 14">The disease is caused by variants affecting the gene represented in this entry. DSPP defects causing dentin abnormalities act in a dominant negative manner and include missense, splice-site, frameshift mutations. 5' frameshift mutations cause dentin dysplasia while frameshift mutations at the 3' end cause the more severe dentinogenesis imperfecta phenotype (PubMed:18521831, PubMed:22392858).</text>
</comment>
<dbReference type="EMBL" id="AF163151">
    <property type="protein sequence ID" value="AAF42472.1"/>
    <property type="molecule type" value="Genomic_DNA"/>
</dbReference>
<dbReference type="EMBL" id="AC093895">
    <property type="status" value="NOT_ANNOTATED_CDS"/>
    <property type="molecule type" value="Genomic_DNA"/>
</dbReference>
<dbReference type="EMBL" id="AF094508">
    <property type="protein sequence ID" value="AAD16120.1"/>
    <property type="molecule type" value="mRNA"/>
</dbReference>
<dbReference type="CCDS" id="CCDS43248.1"/>
<dbReference type="RefSeq" id="NP_055023.2">
    <property type="nucleotide sequence ID" value="NM_014208.3"/>
</dbReference>
<dbReference type="BioGRID" id="108168">
    <property type="interactions" value="3"/>
</dbReference>
<dbReference type="FunCoup" id="Q9NZW4">
    <property type="interactions" value="91"/>
</dbReference>
<dbReference type="STRING" id="9606.ENSP00000498766"/>
<dbReference type="GlyCosmos" id="Q9NZW4">
    <property type="glycosylation" value="12 sites, No reported glycans"/>
</dbReference>
<dbReference type="GlyGen" id="Q9NZW4">
    <property type="glycosylation" value="13 sites"/>
</dbReference>
<dbReference type="iPTMnet" id="Q9NZW4"/>
<dbReference type="PhosphoSitePlus" id="Q9NZW4"/>
<dbReference type="BioMuta" id="DSPP"/>
<dbReference type="DMDM" id="215273974"/>
<dbReference type="MassIVE" id="Q9NZW4"/>
<dbReference type="PaxDb" id="9606-ENSP00000382213"/>
<dbReference type="PeptideAtlas" id="Q9NZW4"/>
<dbReference type="Antibodypedia" id="51372">
    <property type="antibodies" value="75 antibodies from 17 providers"/>
</dbReference>
<dbReference type="DNASU" id="1834"/>
<dbReference type="Ensembl" id="ENST00000651931.1">
    <property type="protein sequence ID" value="ENSP00000498766.1"/>
    <property type="gene ID" value="ENSG00000152591.15"/>
</dbReference>
<dbReference type="GeneID" id="1834"/>
<dbReference type="KEGG" id="hsa:1834"/>
<dbReference type="MANE-Select" id="ENST00000651931.1">
    <property type="protein sequence ID" value="ENSP00000498766.1"/>
    <property type="RefSeq nucleotide sequence ID" value="NM_014208.3"/>
    <property type="RefSeq protein sequence ID" value="NP_055023.2"/>
</dbReference>
<dbReference type="UCSC" id="uc003hqu.3">
    <property type="organism name" value="human"/>
</dbReference>
<dbReference type="AGR" id="HGNC:3054"/>
<dbReference type="CTD" id="1834"/>
<dbReference type="DisGeNET" id="1834"/>
<dbReference type="GeneCards" id="DSPP"/>
<dbReference type="HGNC" id="HGNC:3054">
    <property type="gene designation" value="DSPP"/>
</dbReference>
<dbReference type="HPA" id="ENSG00000152591">
    <property type="expression patterns" value="Not detected"/>
</dbReference>
<dbReference type="MalaCards" id="DSPP"/>
<dbReference type="MIM" id="125420">
    <property type="type" value="phenotype"/>
</dbReference>
<dbReference type="MIM" id="125485">
    <property type="type" value="gene"/>
</dbReference>
<dbReference type="MIM" id="125490">
    <property type="type" value="phenotype"/>
</dbReference>
<dbReference type="MIM" id="125500">
    <property type="type" value="phenotype"/>
</dbReference>
<dbReference type="MIM" id="605594">
    <property type="type" value="phenotype"/>
</dbReference>
<dbReference type="neXtProt" id="NX_Q9NZW4"/>
<dbReference type="OpenTargets" id="ENSG00000152591"/>
<dbReference type="Orphanet" id="99789">
    <property type="disease" value="Dentin dysplasia type I"/>
</dbReference>
<dbReference type="Orphanet" id="99791">
    <property type="disease" value="Dentin dysplasia type II"/>
</dbReference>
<dbReference type="Orphanet" id="166260">
    <property type="disease" value="Dentinogenesis imperfecta type 2"/>
</dbReference>
<dbReference type="Orphanet" id="166265">
    <property type="disease" value="Dentinogenesis imperfecta type 3"/>
</dbReference>
<dbReference type="PharmGKB" id="PA27507"/>
<dbReference type="VEuPathDB" id="HostDB:ENSG00000152591"/>
<dbReference type="eggNOG" id="ENOG502S0YS">
    <property type="taxonomic scope" value="Eukaryota"/>
</dbReference>
<dbReference type="GeneTree" id="ENSGT00730000111489"/>
<dbReference type="HOGENOM" id="CLU_006339_0_0_1"/>
<dbReference type="InParanoid" id="Q9NZW4"/>
<dbReference type="OMA" id="GIHRKEE"/>
<dbReference type="OrthoDB" id="9838359at2759"/>
<dbReference type="PAN-GO" id="Q9NZW4">
    <property type="GO annotations" value="5 GO annotations based on evolutionary models"/>
</dbReference>
<dbReference type="PhylomeDB" id="Q9NZW4"/>
<dbReference type="TreeFam" id="TF318563"/>
<dbReference type="PathwayCommons" id="Q9NZW4"/>
<dbReference type="Reactome" id="R-HSA-3000178">
    <property type="pathway name" value="ECM proteoglycans"/>
</dbReference>
<dbReference type="SignaLink" id="Q9NZW4"/>
<dbReference type="SIGNOR" id="Q9NZW4"/>
<dbReference type="BioGRID-ORCS" id="1834">
    <property type="hits" value="7 hits in 1132 CRISPR screens"/>
</dbReference>
<dbReference type="GeneWiki" id="Dentin_sialophosphoprotein_(gene)"/>
<dbReference type="GenomeRNAi" id="1834"/>
<dbReference type="Pharos" id="Q9NZW4">
    <property type="development level" value="Tbio"/>
</dbReference>
<dbReference type="PRO" id="PR:Q9NZW4"/>
<dbReference type="Proteomes" id="UP000005640">
    <property type="component" value="Chromosome 4"/>
</dbReference>
<dbReference type="RNAct" id="Q9NZW4">
    <property type="molecule type" value="protein"/>
</dbReference>
<dbReference type="Bgee" id="ENSG00000152591">
    <property type="expression patterns" value="Expressed in buccal mucosa cell and 66 other cell types or tissues"/>
</dbReference>
<dbReference type="GO" id="GO:0005737">
    <property type="term" value="C:cytoplasm"/>
    <property type="evidence" value="ECO:0000314"/>
    <property type="project" value="UniProtKB"/>
</dbReference>
<dbReference type="GO" id="GO:0031012">
    <property type="term" value="C:extracellular matrix"/>
    <property type="evidence" value="ECO:0000304"/>
    <property type="project" value="ProtInc"/>
</dbReference>
<dbReference type="GO" id="GO:0005576">
    <property type="term" value="C:extracellular region"/>
    <property type="evidence" value="ECO:0000304"/>
    <property type="project" value="Reactome"/>
</dbReference>
<dbReference type="GO" id="GO:0005634">
    <property type="term" value="C:nucleus"/>
    <property type="evidence" value="ECO:0000318"/>
    <property type="project" value="GO_Central"/>
</dbReference>
<dbReference type="GO" id="GO:0005509">
    <property type="term" value="F:calcium ion binding"/>
    <property type="evidence" value="ECO:0000304"/>
    <property type="project" value="ProtInc"/>
</dbReference>
<dbReference type="GO" id="GO:0005518">
    <property type="term" value="F:collagen binding"/>
    <property type="evidence" value="ECO:0000318"/>
    <property type="project" value="GO_Central"/>
</dbReference>
<dbReference type="GO" id="GO:0005201">
    <property type="term" value="F:extracellular matrix structural constituent"/>
    <property type="evidence" value="ECO:0000304"/>
    <property type="project" value="ProtInc"/>
</dbReference>
<dbReference type="GO" id="GO:0031214">
    <property type="term" value="P:biomineral tissue development"/>
    <property type="evidence" value="ECO:0007669"/>
    <property type="project" value="UniProtKB-KW"/>
</dbReference>
<dbReference type="GO" id="GO:0097187">
    <property type="term" value="P:dentinogenesis"/>
    <property type="evidence" value="ECO:0000318"/>
    <property type="project" value="GO_Central"/>
</dbReference>
<dbReference type="GO" id="GO:0071895">
    <property type="term" value="P:odontoblast differentiation"/>
    <property type="evidence" value="ECO:0000318"/>
    <property type="project" value="GO_Central"/>
</dbReference>
<dbReference type="GO" id="GO:1901329">
    <property type="term" value="P:regulation of odontoblast differentiation"/>
    <property type="evidence" value="ECO:0000250"/>
    <property type="project" value="UniProtKB"/>
</dbReference>
<dbReference type="PANTHER" id="PTHR47819">
    <property type="entry name" value="DENTIN SIALOPHOSPHOPROTEIN"/>
    <property type="match status" value="1"/>
</dbReference>
<dbReference type="PANTHER" id="PTHR47819:SF1">
    <property type="entry name" value="DENTIN SIALOPHOSPHOPROTEIN"/>
    <property type="match status" value="1"/>
</dbReference>
<protein>
    <recommendedName>
        <fullName>Dentin sialophosphoprotein</fullName>
    </recommendedName>
    <component>
        <recommendedName>
            <fullName>Dentin phosphoprotein</fullName>
        </recommendedName>
        <alternativeName>
            <fullName>Dentin phosphophoryn</fullName>
            <shortName>DPP</shortName>
        </alternativeName>
    </component>
    <component>
        <recommendedName>
            <fullName>Dentin sialoprotein</fullName>
            <shortName>DSP</shortName>
        </recommendedName>
    </component>
</protein>
<name>DSPP_HUMAN</name>
<feature type="signal peptide" evidence="3">
    <location>
        <begin position="1"/>
        <end position="15"/>
    </location>
</feature>
<feature type="chain" id="PRO_0000021120" description="Dentin sialophosphoprotein">
    <location>
        <begin position="16"/>
        <end position="1301"/>
    </location>
</feature>
<feature type="chain" id="PRO_0000021121" description="Dentin sialoprotein">
    <location>
        <begin position="16"/>
        <end position="462"/>
    </location>
</feature>
<feature type="chain" id="PRO_0000021122" description="Dentin phosphoprotein">
    <location>
        <begin position="463"/>
        <end position="1301"/>
    </location>
</feature>
<feature type="region of interest" description="Disordered" evidence="4">
    <location>
        <begin position="55"/>
        <end position="89"/>
    </location>
</feature>
<feature type="region of interest" description="Disordered" evidence="4">
    <location>
        <begin position="146"/>
        <end position="171"/>
    </location>
</feature>
<feature type="region of interest" description="Disordered" evidence="4">
    <location>
        <begin position="202"/>
        <end position="1301"/>
    </location>
</feature>
<feature type="short sequence motif" description="Cell attachment site" evidence="3">
    <location>
        <begin position="488"/>
        <end position="490"/>
    </location>
</feature>
<feature type="compositionally biased region" description="Basic and acidic residues" evidence="4">
    <location>
        <begin position="62"/>
        <end position="79"/>
    </location>
</feature>
<feature type="compositionally biased region" description="Polar residues" evidence="4">
    <location>
        <begin position="146"/>
        <end position="165"/>
    </location>
</feature>
<feature type="compositionally biased region" description="Polar residues" evidence="4">
    <location>
        <begin position="203"/>
        <end position="221"/>
    </location>
</feature>
<feature type="compositionally biased region" description="Acidic residues" evidence="4">
    <location>
        <begin position="251"/>
        <end position="267"/>
    </location>
</feature>
<feature type="compositionally biased region" description="Polar residues" evidence="4">
    <location>
        <begin position="271"/>
        <end position="280"/>
    </location>
</feature>
<feature type="compositionally biased region" description="Basic and acidic residues" evidence="4">
    <location>
        <begin position="281"/>
        <end position="293"/>
    </location>
</feature>
<feature type="compositionally biased region" description="Basic and acidic residues" evidence="4">
    <location>
        <begin position="300"/>
        <end position="327"/>
    </location>
</feature>
<feature type="compositionally biased region" description="Basic and acidic residues" evidence="4">
    <location>
        <begin position="340"/>
        <end position="377"/>
    </location>
</feature>
<feature type="compositionally biased region" description="Basic and acidic residues" evidence="4">
    <location>
        <begin position="388"/>
        <end position="404"/>
    </location>
</feature>
<feature type="compositionally biased region" description="Low complexity" evidence="4">
    <location>
        <begin position="439"/>
        <end position="452"/>
    </location>
</feature>
<feature type="compositionally biased region" description="Low complexity" evidence="4">
    <location>
        <begin position="462"/>
        <end position="487"/>
    </location>
</feature>
<feature type="compositionally biased region" description="Polar residues" evidence="4">
    <location>
        <begin position="488"/>
        <end position="506"/>
    </location>
</feature>
<feature type="compositionally biased region" description="Low complexity" evidence="4">
    <location>
        <begin position="518"/>
        <end position="534"/>
    </location>
</feature>
<feature type="compositionally biased region" description="Basic and acidic residues" evidence="4">
    <location>
        <begin position="536"/>
        <end position="549"/>
    </location>
</feature>
<feature type="compositionally biased region" description="Low complexity" evidence="4">
    <location>
        <begin position="555"/>
        <end position="564"/>
    </location>
</feature>
<feature type="compositionally biased region" description="Acidic residues" evidence="4">
    <location>
        <begin position="581"/>
        <end position="595"/>
    </location>
</feature>
<feature type="compositionally biased region" description="Low complexity" evidence="4">
    <location>
        <begin position="596"/>
        <end position="619"/>
    </location>
</feature>
<feature type="compositionally biased region" description="Basic and acidic residues" evidence="4">
    <location>
        <begin position="620"/>
        <end position="642"/>
    </location>
</feature>
<feature type="compositionally biased region" description="Low complexity" evidence="4">
    <location>
        <begin position="643"/>
        <end position="705"/>
    </location>
</feature>
<feature type="compositionally biased region" description="Low complexity" evidence="4">
    <location>
        <begin position="715"/>
        <end position="1264"/>
    </location>
</feature>
<feature type="compositionally biased region" description="Low complexity" evidence="4">
    <location>
        <begin position="1272"/>
        <end position="1284"/>
    </location>
</feature>
<feature type="compositionally biased region" description="Low complexity" evidence="4">
    <location>
        <begin position="1292"/>
        <end position="1301"/>
    </location>
</feature>
<feature type="modified residue" description="Phosphoserine; by CK1" evidence="3">
    <location>
        <position position="259"/>
    </location>
</feature>
<feature type="modified residue" description="Phosphoserine" evidence="2">
    <location>
        <position position="301"/>
    </location>
</feature>
<feature type="glycosylation site" description="N-linked (GlcNAc...) asparagine" evidence="3">
    <location>
        <position position="41"/>
    </location>
</feature>
<feature type="glycosylation site" description="N-linked (GlcNAc...) asparagine" evidence="3">
    <location>
        <position position="49"/>
    </location>
</feature>
<feature type="glycosylation site" description="N-linked (GlcNAc...) asparagine" evidence="3">
    <location>
        <position position="81"/>
    </location>
</feature>
<feature type="glycosylation site" description="N-linked (GlcNAc...) asparagine" evidence="3">
    <location>
        <position position="130"/>
    </location>
</feature>
<feature type="glycosylation site" description="N-linked (GlcNAc...) asparagine" evidence="3">
    <location>
        <position position="150"/>
    </location>
</feature>
<feature type="glycosylation site" description="N-linked (GlcNAc...) asparagine" evidence="3">
    <location>
        <position position="190"/>
    </location>
</feature>
<feature type="glycosylation site" description="N-linked (GlcNAc...) asparagine" evidence="3">
    <location>
        <position position="191"/>
    </location>
</feature>
<feature type="glycosylation site" description="N-linked (GlcNAc...) asparagine" evidence="3">
    <location>
        <position position="209"/>
    </location>
</feature>
<feature type="glycosylation site" description="N-linked (GlcNAc...) asparagine" evidence="3">
    <location>
        <position position="222"/>
    </location>
</feature>
<feature type="glycosylation site" description="N-linked (GlcNAc...) asparagine" evidence="3">
    <location>
        <position position="275"/>
    </location>
</feature>
<feature type="glycosylation site" description="N-linked (GlcNAc...) asparagine" evidence="3">
    <location>
        <position position="336"/>
    </location>
</feature>
<feature type="glycosylation site" description="N-linked (GlcNAc...) asparagine" evidence="3">
    <location>
        <position position="387"/>
    </location>
</feature>
<feature type="sequence variant" id="VAR_036861" description="In DTDP2; the mutant protein does not translocate into the endoplasmic reticulum; dbSNP:rs121912988." evidence="7">
    <original>Y</original>
    <variation>D</variation>
    <location>
        <position position="6"/>
    </location>
</feature>
<feature type="sequence variant" id="VAR_036862" description="In DGI2; dominant negative mutation; results in signal peptide retention; the mutant protein is retained within the rough ER membrane; dbSNP:rs121912989." evidence="8 14">
    <original>A</original>
    <variation>V</variation>
    <location>
        <position position="15"/>
    </location>
</feature>
<feature type="sequence variant" id="VAR_070252" description="In DGI3; the mutant protein is largely retained in the ER." evidence="15">
    <original>P</original>
    <variation>L</variation>
    <location>
        <position position="17"/>
    </location>
</feature>
<feature type="sequence variant" id="VAR_054443" description="In DGI2 and DGI3; dominant negative mutation; the mutant protein is retained intracellularly; dbSNP:rs121912986." evidence="11 12 14">
    <original>P</original>
    <variation>S</variation>
    <location>
        <position position="17"/>
    </location>
</feature>
<feature type="sequence variant" id="VAR_012280" description="In DFNA39/DGI1; dominant negative mutation; the mutant protein is retained intracellularly; dbSNP:rs121912986." evidence="6 14">
    <original>P</original>
    <variation>T</variation>
    <location>
        <position position="17"/>
    </location>
</feature>
<feature type="sequence variant" id="VAR_070253" description="In DGI2; dominant negative mutation; the mutant protein is retained intracellularly; dbSNP:rs1727745724." evidence="13 14">
    <original>V</original>
    <variation>D</variation>
    <location>
        <position position="18"/>
    </location>
</feature>
<feature type="sequence variant" id="VAR_012281" description="In DFNA39/DGI1 and DGI3; dbSNP:rs121912987." evidence="6 9">
    <original>V</original>
    <variation>F</variation>
    <location>
        <position position="18"/>
    </location>
</feature>
<feature type="sequence variant" id="VAR_030661" description="In DGI2; dbSNP:rs36094464." evidence="8 10">
    <original>R</original>
    <variation>W</variation>
    <location>
        <position position="68"/>
    </location>
</feature>
<feature type="sequence variant" id="VAR_047551" description="In dbSNP:rs3750025.">
    <original>D</original>
    <variation>N</variation>
    <location>
        <position position="243"/>
    </location>
</feature>
<feature type="sequence conflict" description="In Ref. 1; AAF42472." evidence="16" ref="1">
    <original>D</original>
    <variation>DSSDSSS</variation>
    <location>
        <position position="673"/>
    </location>
</feature>
<feature type="sequence conflict" description="In Ref. 1; AAF42472." evidence="16" ref="1">
    <location>
        <begin position="734"/>
        <end position="739"/>
    </location>
</feature>
<feature type="sequence conflict" description="In Ref. 3; AAD16120." evidence="16" ref="3">
    <original>N</original>
    <variation>D</variation>
    <location>
        <position position="799"/>
    </location>
</feature>
<feature type="sequence conflict" description="In Ref. 3; AAD16120." evidence="16" ref="3">
    <original>S</original>
    <variation>C</variation>
    <location>
        <position position="836"/>
    </location>
</feature>
<feature type="sequence conflict" description="In Ref. 1; AAF42472." evidence="16" ref="1">
    <original>G</original>
    <variation>S</variation>
    <location>
        <position position="850"/>
    </location>
</feature>
<feature type="sequence conflict" description="In Ref. 1; AAF42472." evidence="16" ref="1">
    <original>N</original>
    <variation>NSSD</variation>
    <location>
        <position position="875"/>
    </location>
</feature>
<feature type="sequence conflict" description="In Ref. 1; AAF42472." evidence="16" ref="1">
    <original>S</original>
    <variation>G</variation>
    <location>
        <position position="960"/>
    </location>
</feature>
<feature type="sequence conflict" description="In Ref. 3; AAD16120." evidence="16" ref="3">
    <original>N</original>
    <variation>D</variation>
    <location>
        <position position="1002"/>
    </location>
</feature>
<feature type="sequence conflict" description="In Ref. 3; AAD16120." evidence="16" ref="3">
    <original>S</original>
    <variation>G</variation>
    <location>
        <position position="1022"/>
    </location>
</feature>
<feature type="sequence conflict" description="In Ref. 1; AAF42472 and 3; AAD16120." evidence="16" ref="1 3">
    <original>N</original>
    <variation>D</variation>
    <location>
        <position position="1029"/>
    </location>
</feature>
<feature type="sequence conflict" description="In Ref. 1; AAF42472." evidence="16" ref="1">
    <original>D</original>
    <variation>N</variation>
    <location>
        <position position="1044"/>
    </location>
</feature>
<feature type="sequence conflict" description="In Ref. 3; AAD16120." evidence="16" ref="3">
    <original>D</original>
    <variation>N</variation>
    <location>
        <position position="1050"/>
    </location>
</feature>
<feature type="sequence conflict" description="In Ref. 1; AAF42472 and 3; AAD16120." evidence="16" ref="1 3">
    <original>N</original>
    <variation>D</variation>
    <location>
        <position position="1056"/>
    </location>
</feature>
<feature type="sequence conflict" description="In Ref. 1; AAF42472." evidence="16" ref="1">
    <original>D</original>
    <variation>G</variation>
    <location>
        <position position="1062"/>
    </location>
</feature>
<feature type="sequence conflict" description="In Ref. 3; AAD16120." evidence="16" ref="3">
    <original>D</original>
    <variation>E</variation>
    <location>
        <position position="1077"/>
    </location>
</feature>
<feature type="sequence conflict" description="In Ref. 1; AAF42472 and 3; AAD16120." evidence="16" ref="1 3">
    <original>E</original>
    <variation>D</variation>
    <location>
        <position position="1083"/>
    </location>
</feature>
<feature type="sequence conflict" description="In Ref. 1; AAF42472 and 3; AAD16120." evidence="16" ref="1 3">
    <location>
        <begin position="1090"/>
        <end position="1140"/>
    </location>
</feature>
<feature type="sequence conflict" description="In Ref. 1; AAF42472." evidence="16" ref="1">
    <original>D</original>
    <variation>E</variation>
    <location>
        <position position="1143"/>
    </location>
</feature>
<feature type="sequence conflict" description="In Ref. 1; AAF42472." evidence="16" ref="1">
    <original>E</original>
    <variation>D</variation>
    <location>
        <position position="1149"/>
    </location>
</feature>
<feature type="sequence conflict" description="In Ref. 3; AAD16120." evidence="16" ref="3">
    <original>D</original>
    <variation>N</variation>
    <location>
        <position position="1152"/>
    </location>
</feature>
<feature type="sequence conflict" description="In Ref. 3; AAD16120." evidence="16" ref="3">
    <original>S</original>
    <variation>R</variation>
    <location>
        <position position="1180"/>
    </location>
</feature>
<accession>Q9NZW4</accession>
<accession>A8MUI0</accession>
<accession>O95815</accession>
<proteinExistence type="evidence at protein level"/>